<gene>
    <name evidence="1" type="primary">flgH</name>
    <name type="ordered locus">ECH74115_1458</name>
</gene>
<feature type="signal peptide" evidence="1">
    <location>
        <begin position="1"/>
        <end position="21"/>
    </location>
</feature>
<feature type="chain" id="PRO_1000123945" description="Flagellar L-ring protein">
    <location>
        <begin position="22"/>
        <end position="232"/>
    </location>
</feature>
<feature type="lipid moiety-binding region" description="N-palmitoyl cysteine" evidence="1">
    <location>
        <position position="22"/>
    </location>
</feature>
<feature type="lipid moiety-binding region" description="S-diacylglycerol cysteine" evidence="1">
    <location>
        <position position="22"/>
    </location>
</feature>
<reference key="1">
    <citation type="journal article" date="2011" name="Proc. Natl. Acad. Sci. U.S.A.">
        <title>Genomic anatomy of Escherichia coli O157:H7 outbreaks.</title>
        <authorList>
            <person name="Eppinger M."/>
            <person name="Mammel M.K."/>
            <person name="Leclerc J.E."/>
            <person name="Ravel J."/>
            <person name="Cebula T.A."/>
        </authorList>
    </citation>
    <scope>NUCLEOTIDE SEQUENCE [LARGE SCALE GENOMIC DNA]</scope>
    <source>
        <strain>EC4115 / EHEC</strain>
    </source>
</reference>
<keyword id="KW-0975">Bacterial flagellum</keyword>
<keyword id="KW-0998">Cell outer membrane</keyword>
<keyword id="KW-0449">Lipoprotein</keyword>
<keyword id="KW-0472">Membrane</keyword>
<keyword id="KW-0564">Palmitate</keyword>
<keyword id="KW-0732">Signal</keyword>
<proteinExistence type="inferred from homology"/>
<protein>
    <recommendedName>
        <fullName evidence="1">Flagellar L-ring protein</fullName>
    </recommendedName>
    <alternativeName>
        <fullName evidence="1">Basal body L-ring protein</fullName>
    </alternativeName>
</protein>
<sequence length="232" mass="24615">MQKNAAHTYAISSLLVLSLTGCAWIPSTPLVQGATSAQPVPGPTPVANGSIFQSAQPINYGYQPLFEDRRPRNIGDTLTIVLQENVSASKSSSANASRDGKTNFGFDTVPRYLQGLFGNARADVEASGGNTFNGKGGANASNTFSGTLTVTVDQVLVNGNLHVVGEKQIAINQGTEFIRFSGVVNPRTISGSNTVPSTQVADARIEYVGNGYINEAQNMGWLQRFFLNLSPM</sequence>
<name>FLGH_ECO5E</name>
<comment type="function">
    <text evidence="1">Assembles around the rod to form the L-ring and probably protects the motor/basal body from shearing forces during rotation.</text>
</comment>
<comment type="subunit">
    <text evidence="1">The basal body constitutes a major portion of the flagellar organelle and consists of four rings (L,P,S, and M) mounted on a central rod.</text>
</comment>
<comment type="subcellular location">
    <subcellularLocation>
        <location evidence="1">Cell outer membrane</location>
        <topology evidence="1">Lipid-anchor</topology>
    </subcellularLocation>
    <subcellularLocation>
        <location evidence="1">Bacterial flagellum basal body</location>
    </subcellularLocation>
</comment>
<comment type="similarity">
    <text evidence="1">Belongs to the FlgH family.</text>
</comment>
<evidence type="ECO:0000255" key="1">
    <source>
        <dbReference type="HAMAP-Rule" id="MF_00415"/>
    </source>
</evidence>
<organism>
    <name type="scientific">Escherichia coli O157:H7 (strain EC4115 / EHEC)</name>
    <dbReference type="NCBI Taxonomy" id="444450"/>
    <lineage>
        <taxon>Bacteria</taxon>
        <taxon>Pseudomonadati</taxon>
        <taxon>Pseudomonadota</taxon>
        <taxon>Gammaproteobacteria</taxon>
        <taxon>Enterobacterales</taxon>
        <taxon>Enterobacteriaceae</taxon>
        <taxon>Escherichia</taxon>
    </lineage>
</organism>
<accession>B5YVU9</accession>
<dbReference type="EMBL" id="CP001164">
    <property type="protein sequence ID" value="ACI37231.1"/>
    <property type="molecule type" value="Genomic_DNA"/>
</dbReference>
<dbReference type="RefSeq" id="WP_001295442.1">
    <property type="nucleotide sequence ID" value="NC_011353.1"/>
</dbReference>
<dbReference type="SMR" id="B5YVU9"/>
<dbReference type="GeneID" id="93776328"/>
<dbReference type="KEGG" id="ecf:ECH74115_1458"/>
<dbReference type="HOGENOM" id="CLU_069313_0_0_6"/>
<dbReference type="GO" id="GO:0009427">
    <property type="term" value="C:bacterial-type flagellum basal body, distal rod, L ring"/>
    <property type="evidence" value="ECO:0007669"/>
    <property type="project" value="InterPro"/>
</dbReference>
<dbReference type="GO" id="GO:0009279">
    <property type="term" value="C:cell outer membrane"/>
    <property type="evidence" value="ECO:0007669"/>
    <property type="project" value="UniProtKB-SubCell"/>
</dbReference>
<dbReference type="GO" id="GO:0003774">
    <property type="term" value="F:cytoskeletal motor activity"/>
    <property type="evidence" value="ECO:0007669"/>
    <property type="project" value="InterPro"/>
</dbReference>
<dbReference type="GO" id="GO:0071973">
    <property type="term" value="P:bacterial-type flagellum-dependent cell motility"/>
    <property type="evidence" value="ECO:0007669"/>
    <property type="project" value="InterPro"/>
</dbReference>
<dbReference type="HAMAP" id="MF_00415">
    <property type="entry name" value="FlgH"/>
    <property type="match status" value="1"/>
</dbReference>
<dbReference type="InterPro" id="IPR000527">
    <property type="entry name" value="Flag_Lring"/>
</dbReference>
<dbReference type="NCBIfam" id="NF001301">
    <property type="entry name" value="PRK00249.1-1"/>
    <property type="match status" value="1"/>
</dbReference>
<dbReference type="PANTHER" id="PTHR34933">
    <property type="entry name" value="FLAGELLAR L-RING PROTEIN"/>
    <property type="match status" value="1"/>
</dbReference>
<dbReference type="PANTHER" id="PTHR34933:SF3">
    <property type="entry name" value="FLAGELLAR L-RING PROTEIN"/>
    <property type="match status" value="1"/>
</dbReference>
<dbReference type="Pfam" id="PF02107">
    <property type="entry name" value="FlgH"/>
    <property type="match status" value="1"/>
</dbReference>
<dbReference type="PRINTS" id="PR01008">
    <property type="entry name" value="FLGLRINGFLGH"/>
</dbReference>
<dbReference type="PROSITE" id="PS51257">
    <property type="entry name" value="PROKAR_LIPOPROTEIN"/>
    <property type="match status" value="1"/>
</dbReference>